<geneLocation type="mitochondrion"/>
<feature type="chain" id="PRO_0000254695" description="Cytochrome b">
    <location>
        <begin position="1"/>
        <end position="379"/>
    </location>
</feature>
<feature type="transmembrane region" description="Helical" evidence="2">
    <location>
        <begin position="33"/>
        <end position="53"/>
    </location>
</feature>
<feature type="transmembrane region" description="Helical" evidence="2">
    <location>
        <begin position="77"/>
        <end position="98"/>
    </location>
</feature>
<feature type="transmembrane region" description="Helical" evidence="2">
    <location>
        <begin position="113"/>
        <end position="133"/>
    </location>
</feature>
<feature type="transmembrane region" description="Helical" evidence="2">
    <location>
        <begin position="178"/>
        <end position="198"/>
    </location>
</feature>
<feature type="transmembrane region" description="Helical" evidence="2">
    <location>
        <begin position="226"/>
        <end position="246"/>
    </location>
</feature>
<feature type="transmembrane region" description="Helical" evidence="2">
    <location>
        <begin position="288"/>
        <end position="308"/>
    </location>
</feature>
<feature type="transmembrane region" description="Helical" evidence="2">
    <location>
        <begin position="320"/>
        <end position="340"/>
    </location>
</feature>
<feature type="transmembrane region" description="Helical" evidence="2">
    <location>
        <begin position="347"/>
        <end position="367"/>
    </location>
</feature>
<feature type="binding site" description="axial binding residue" evidence="2">
    <location>
        <position position="83"/>
    </location>
    <ligand>
        <name>heme b</name>
        <dbReference type="ChEBI" id="CHEBI:60344"/>
        <label>b562</label>
    </ligand>
    <ligandPart>
        <name>Fe</name>
        <dbReference type="ChEBI" id="CHEBI:18248"/>
    </ligandPart>
</feature>
<feature type="binding site" description="axial binding residue" evidence="2">
    <location>
        <position position="97"/>
    </location>
    <ligand>
        <name>heme b</name>
        <dbReference type="ChEBI" id="CHEBI:60344"/>
        <label>b566</label>
    </ligand>
    <ligandPart>
        <name>Fe</name>
        <dbReference type="ChEBI" id="CHEBI:18248"/>
    </ligandPart>
</feature>
<feature type="binding site" description="axial binding residue" evidence="2">
    <location>
        <position position="182"/>
    </location>
    <ligand>
        <name>heme b</name>
        <dbReference type="ChEBI" id="CHEBI:60344"/>
        <label>b562</label>
    </ligand>
    <ligandPart>
        <name>Fe</name>
        <dbReference type="ChEBI" id="CHEBI:18248"/>
    </ligandPart>
</feature>
<feature type="binding site" description="axial binding residue" evidence="2">
    <location>
        <position position="196"/>
    </location>
    <ligand>
        <name>heme b</name>
        <dbReference type="ChEBI" id="CHEBI:60344"/>
        <label>b566</label>
    </ligand>
    <ligandPart>
        <name>Fe</name>
        <dbReference type="ChEBI" id="CHEBI:18248"/>
    </ligandPart>
</feature>
<feature type="binding site" evidence="2">
    <location>
        <position position="201"/>
    </location>
    <ligand>
        <name>a ubiquinone</name>
        <dbReference type="ChEBI" id="CHEBI:16389"/>
    </ligand>
</feature>
<keyword id="KW-0249">Electron transport</keyword>
<keyword id="KW-0349">Heme</keyword>
<keyword id="KW-0408">Iron</keyword>
<keyword id="KW-0472">Membrane</keyword>
<keyword id="KW-0479">Metal-binding</keyword>
<keyword id="KW-0496">Mitochondrion</keyword>
<keyword id="KW-0999">Mitochondrion inner membrane</keyword>
<keyword id="KW-0679">Respiratory chain</keyword>
<keyword id="KW-0812">Transmembrane</keyword>
<keyword id="KW-1133">Transmembrane helix</keyword>
<keyword id="KW-0813">Transport</keyword>
<keyword id="KW-0830">Ubiquinone</keyword>
<protein>
    <recommendedName>
        <fullName>Cytochrome b</fullName>
    </recommendedName>
    <alternativeName>
        <fullName>Complex III subunit 3</fullName>
    </alternativeName>
    <alternativeName>
        <fullName>Complex III subunit III</fullName>
    </alternativeName>
    <alternativeName>
        <fullName>Cytochrome b-c1 complex subunit 3</fullName>
    </alternativeName>
    <alternativeName>
        <fullName>Ubiquinol-cytochrome-c reductase complex cytochrome b subunit</fullName>
    </alternativeName>
</protein>
<evidence type="ECO:0000250" key="1"/>
<evidence type="ECO:0000250" key="2">
    <source>
        <dbReference type="UniProtKB" id="P00157"/>
    </source>
</evidence>
<evidence type="ECO:0000255" key="3">
    <source>
        <dbReference type="PROSITE-ProRule" id="PRU00967"/>
    </source>
</evidence>
<evidence type="ECO:0000255" key="4">
    <source>
        <dbReference type="PROSITE-ProRule" id="PRU00968"/>
    </source>
</evidence>
<proteinExistence type="inferred from homology"/>
<gene>
    <name type="primary">MT-CYB</name>
    <name type="synonym">COB</name>
    <name type="synonym">CYTB</name>
    <name type="synonym">MTCYB</name>
</gene>
<accession>Q5F4E8</accession>
<dbReference type="EMBL" id="AJ841971">
    <property type="protein sequence ID" value="CAH56563.1"/>
    <property type="molecule type" value="Genomic_DNA"/>
</dbReference>
<dbReference type="SMR" id="Q5F4E8"/>
<dbReference type="GO" id="GO:0005743">
    <property type="term" value="C:mitochondrial inner membrane"/>
    <property type="evidence" value="ECO:0007669"/>
    <property type="project" value="UniProtKB-SubCell"/>
</dbReference>
<dbReference type="GO" id="GO:0045275">
    <property type="term" value="C:respiratory chain complex III"/>
    <property type="evidence" value="ECO:0007669"/>
    <property type="project" value="InterPro"/>
</dbReference>
<dbReference type="GO" id="GO:0046872">
    <property type="term" value="F:metal ion binding"/>
    <property type="evidence" value="ECO:0007669"/>
    <property type="project" value="UniProtKB-KW"/>
</dbReference>
<dbReference type="GO" id="GO:0008121">
    <property type="term" value="F:ubiquinol-cytochrome-c reductase activity"/>
    <property type="evidence" value="ECO:0007669"/>
    <property type="project" value="InterPro"/>
</dbReference>
<dbReference type="GO" id="GO:0006122">
    <property type="term" value="P:mitochondrial electron transport, ubiquinol to cytochrome c"/>
    <property type="evidence" value="ECO:0007669"/>
    <property type="project" value="TreeGrafter"/>
</dbReference>
<dbReference type="CDD" id="cd00290">
    <property type="entry name" value="cytochrome_b_C"/>
    <property type="match status" value="1"/>
</dbReference>
<dbReference type="CDD" id="cd00284">
    <property type="entry name" value="Cytochrome_b_N"/>
    <property type="match status" value="1"/>
</dbReference>
<dbReference type="FunFam" id="1.20.810.10:FF:000002">
    <property type="entry name" value="Cytochrome b"/>
    <property type="match status" value="1"/>
</dbReference>
<dbReference type="Gene3D" id="1.20.810.10">
    <property type="entry name" value="Cytochrome Bc1 Complex, Chain C"/>
    <property type="match status" value="1"/>
</dbReference>
<dbReference type="InterPro" id="IPR005798">
    <property type="entry name" value="Cyt_b/b6_C"/>
</dbReference>
<dbReference type="InterPro" id="IPR036150">
    <property type="entry name" value="Cyt_b/b6_C_sf"/>
</dbReference>
<dbReference type="InterPro" id="IPR005797">
    <property type="entry name" value="Cyt_b/b6_N"/>
</dbReference>
<dbReference type="InterPro" id="IPR027387">
    <property type="entry name" value="Cytb/b6-like_sf"/>
</dbReference>
<dbReference type="InterPro" id="IPR030689">
    <property type="entry name" value="Cytochrome_b"/>
</dbReference>
<dbReference type="InterPro" id="IPR048260">
    <property type="entry name" value="Cytochrome_b_C_euk/bac"/>
</dbReference>
<dbReference type="InterPro" id="IPR048259">
    <property type="entry name" value="Cytochrome_b_N_euk/bac"/>
</dbReference>
<dbReference type="InterPro" id="IPR016174">
    <property type="entry name" value="Di-haem_cyt_TM"/>
</dbReference>
<dbReference type="PANTHER" id="PTHR19271">
    <property type="entry name" value="CYTOCHROME B"/>
    <property type="match status" value="1"/>
</dbReference>
<dbReference type="PANTHER" id="PTHR19271:SF16">
    <property type="entry name" value="CYTOCHROME B"/>
    <property type="match status" value="1"/>
</dbReference>
<dbReference type="Pfam" id="PF00032">
    <property type="entry name" value="Cytochrom_B_C"/>
    <property type="match status" value="1"/>
</dbReference>
<dbReference type="Pfam" id="PF00033">
    <property type="entry name" value="Cytochrome_B"/>
    <property type="match status" value="1"/>
</dbReference>
<dbReference type="PIRSF" id="PIRSF038885">
    <property type="entry name" value="COB"/>
    <property type="match status" value="1"/>
</dbReference>
<dbReference type="SUPFAM" id="SSF81648">
    <property type="entry name" value="a domain/subunit of cytochrome bc1 complex (Ubiquinol-cytochrome c reductase)"/>
    <property type="match status" value="1"/>
</dbReference>
<dbReference type="SUPFAM" id="SSF81342">
    <property type="entry name" value="Transmembrane di-heme cytochromes"/>
    <property type="match status" value="1"/>
</dbReference>
<dbReference type="PROSITE" id="PS51003">
    <property type="entry name" value="CYTB_CTER"/>
    <property type="match status" value="1"/>
</dbReference>
<dbReference type="PROSITE" id="PS51002">
    <property type="entry name" value="CYTB_NTER"/>
    <property type="match status" value="1"/>
</dbReference>
<reference key="1">
    <citation type="journal article" date="2004" name="Acta Chiropt.">
        <title>Phylogeny of African myotis bats (Chiroptera, Vespertilionidae) inferred from cytochrome b sequences.</title>
        <authorList>
            <person name="Stadelmann B."/>
            <person name="Jacobs D.S."/>
            <person name="Schoeman C."/>
            <person name="Ruedi M."/>
        </authorList>
    </citation>
    <scope>NUCLEOTIDE SEQUENCE [GENOMIC DNA]</scope>
    <source>
        <tissue>Wing</tissue>
    </source>
</reference>
<sequence length="379" mass="43167">MTNIRKSHPLMKIINNSLIDLPAPSNISSWWNFGSLLGICLMLQILTGLFLAMHYTSDTMTAFNSVTHICRDVNYGWVLRYLHANGASMFFICLYLHIGRGIYYGSYMYKETWNIGIILLFSIMATAFMGYVLPWGQMSFWGATVITNLLSAIPYIGMDLVEWIWGGFSVDKATLTRFFAFHFLLPFIISALVMVHLLFLHETGSNNPTGIPSNTDMIPFHPYYTIKDILGLMVMMMILLALVLFTPDMLGDPDNYMPANPLNTPPHIKPEWYFLFAYAILRSIPNKLGGVLALVISIAILFFIPFLHTSKQRSMTFRPLSQCLFWLLTTDILTLTWIGGQPVEHPYIIIGQAASILYFSIIIILMPLIGLMENRLMKW</sequence>
<organism>
    <name type="scientific">Harpiocephalus mordax</name>
    <name type="common">Greater hairy-winged bat</name>
    <name type="synonym">Harpiocephalus harpia mordax</name>
    <dbReference type="NCBI Taxonomy" id="294655"/>
    <lineage>
        <taxon>Eukaryota</taxon>
        <taxon>Metazoa</taxon>
        <taxon>Chordata</taxon>
        <taxon>Craniata</taxon>
        <taxon>Vertebrata</taxon>
        <taxon>Euteleostomi</taxon>
        <taxon>Mammalia</taxon>
        <taxon>Eutheria</taxon>
        <taxon>Laurasiatheria</taxon>
        <taxon>Chiroptera</taxon>
        <taxon>Yangochiroptera</taxon>
        <taxon>Vespertilionidae</taxon>
        <taxon>Harpiocephalus</taxon>
    </lineage>
</organism>
<name>CYB_HARMO</name>
<comment type="function">
    <text evidence="2">Component of the ubiquinol-cytochrome c reductase complex (complex III or cytochrome b-c1 complex) that is part of the mitochondrial respiratory chain. The b-c1 complex mediates electron transfer from ubiquinol to cytochrome c. Contributes to the generation of a proton gradient across the mitochondrial membrane that is then used for ATP synthesis.</text>
</comment>
<comment type="cofactor">
    <cofactor evidence="2">
        <name>heme b</name>
        <dbReference type="ChEBI" id="CHEBI:60344"/>
    </cofactor>
    <text evidence="2">Binds 2 heme b groups non-covalently.</text>
</comment>
<comment type="subunit">
    <text evidence="2">The cytochrome bc1 complex contains 11 subunits: 3 respiratory subunits (MT-CYB, CYC1 and UQCRFS1), 2 core proteins (UQCRC1 and UQCRC2) and 6 low-molecular weight proteins (UQCRH/QCR6, UQCRB/QCR7, UQCRQ/QCR8, UQCR10/QCR9, UQCR11/QCR10 and a cleavage product of UQCRFS1). This cytochrome bc1 complex then forms a dimer.</text>
</comment>
<comment type="subcellular location">
    <subcellularLocation>
        <location evidence="2">Mitochondrion inner membrane</location>
        <topology evidence="2">Multi-pass membrane protein</topology>
    </subcellularLocation>
</comment>
<comment type="miscellaneous">
    <text evidence="1">Heme 1 (or BL or b562) is low-potential and absorbs at about 562 nm, and heme 2 (or BH or b566) is high-potential and absorbs at about 566 nm.</text>
</comment>
<comment type="similarity">
    <text evidence="3 4">Belongs to the cytochrome b family.</text>
</comment>
<comment type="caution">
    <text evidence="2">The full-length protein contains only eight transmembrane helices, not nine as predicted by bioinformatics tools.</text>
</comment>